<organism>
    <name type="scientific">Xenopus tropicalis</name>
    <name type="common">Western clawed frog</name>
    <name type="synonym">Silurana tropicalis</name>
    <dbReference type="NCBI Taxonomy" id="8364"/>
    <lineage>
        <taxon>Eukaryota</taxon>
        <taxon>Metazoa</taxon>
        <taxon>Chordata</taxon>
        <taxon>Craniata</taxon>
        <taxon>Vertebrata</taxon>
        <taxon>Euteleostomi</taxon>
        <taxon>Amphibia</taxon>
        <taxon>Batrachia</taxon>
        <taxon>Anura</taxon>
        <taxon>Pipoidea</taxon>
        <taxon>Pipidae</taxon>
        <taxon>Xenopodinae</taxon>
        <taxon>Xenopus</taxon>
        <taxon>Silurana</taxon>
    </lineage>
</organism>
<gene>
    <name type="primary">dus3l</name>
    <name type="ORF">TNeu105e03.1</name>
</gene>
<dbReference type="EC" id="1.3.1.89" evidence="1"/>
<dbReference type="EC" id="1.3.1.-" evidence="1"/>
<dbReference type="EMBL" id="CR942642">
    <property type="protein sequence ID" value="CAJ83250.1"/>
    <property type="molecule type" value="mRNA"/>
</dbReference>
<dbReference type="EMBL" id="BC064263">
    <property type="protein sequence ID" value="AAH64263.1"/>
    <property type="molecule type" value="mRNA"/>
</dbReference>
<dbReference type="RefSeq" id="NP_989334.1">
    <property type="nucleotide sequence ID" value="NM_204003.1"/>
</dbReference>
<dbReference type="SMR" id="Q28BT8"/>
<dbReference type="FunCoup" id="Q28BT8">
    <property type="interactions" value="1696"/>
</dbReference>
<dbReference type="STRING" id="8364.ENSXETP00000021572"/>
<dbReference type="PaxDb" id="8364-ENSXETP00000057164"/>
<dbReference type="GeneID" id="394959"/>
<dbReference type="KEGG" id="xtr:394959"/>
<dbReference type="AGR" id="Xenbase:XB-GENE-943237"/>
<dbReference type="CTD" id="56931"/>
<dbReference type="Xenbase" id="XB-GENE-943237">
    <property type="gene designation" value="dus3l"/>
</dbReference>
<dbReference type="eggNOG" id="KOG2333">
    <property type="taxonomic scope" value="Eukaryota"/>
</dbReference>
<dbReference type="InParanoid" id="Q28BT8"/>
<dbReference type="OrthoDB" id="259935at2759"/>
<dbReference type="Proteomes" id="UP000008143">
    <property type="component" value="Chromosome 6"/>
</dbReference>
<dbReference type="GO" id="GO:0050660">
    <property type="term" value="F:flavin adenine dinucleotide binding"/>
    <property type="evidence" value="ECO:0007669"/>
    <property type="project" value="InterPro"/>
</dbReference>
<dbReference type="GO" id="GO:0106414">
    <property type="term" value="F:mRNA dihydrouridine synthase activity"/>
    <property type="evidence" value="ECO:0007669"/>
    <property type="project" value="RHEA"/>
</dbReference>
<dbReference type="GO" id="GO:0102265">
    <property type="term" value="F:tRNA-dihydrouridine47 synthase activity"/>
    <property type="evidence" value="ECO:0000250"/>
    <property type="project" value="UniProtKB"/>
</dbReference>
<dbReference type="GO" id="GO:0008270">
    <property type="term" value="F:zinc ion binding"/>
    <property type="evidence" value="ECO:0007669"/>
    <property type="project" value="UniProtKB-KW"/>
</dbReference>
<dbReference type="GO" id="GO:0006397">
    <property type="term" value="P:mRNA processing"/>
    <property type="evidence" value="ECO:0007669"/>
    <property type="project" value="UniProtKB-KW"/>
</dbReference>
<dbReference type="GO" id="GO:0006417">
    <property type="term" value="P:regulation of translation"/>
    <property type="evidence" value="ECO:0000250"/>
    <property type="project" value="UniProtKB"/>
</dbReference>
<dbReference type="GO" id="GO:0002943">
    <property type="term" value="P:tRNA dihydrouridine synthesis"/>
    <property type="evidence" value="ECO:0000250"/>
    <property type="project" value="UniProtKB"/>
</dbReference>
<dbReference type="CDD" id="cd02801">
    <property type="entry name" value="DUS_like_FMN"/>
    <property type="match status" value="1"/>
</dbReference>
<dbReference type="FunFam" id="3.20.20.70:FF:000067">
    <property type="entry name" value="tRNA-dihydrouridine(47) synthase [NAD(P)(+)]"/>
    <property type="match status" value="1"/>
</dbReference>
<dbReference type="FunFam" id="4.10.1000.10:FF:000029">
    <property type="entry name" value="tRNA-dihydrouridine(47) synthase [NAD(P)(+)]"/>
    <property type="match status" value="1"/>
</dbReference>
<dbReference type="Gene3D" id="3.20.20.70">
    <property type="entry name" value="Aldolase class I"/>
    <property type="match status" value="1"/>
</dbReference>
<dbReference type="Gene3D" id="4.10.1000.10">
    <property type="entry name" value="Zinc finger, CCCH-type"/>
    <property type="match status" value="1"/>
</dbReference>
<dbReference type="InterPro" id="IPR013785">
    <property type="entry name" value="Aldolase_TIM"/>
</dbReference>
<dbReference type="InterPro" id="IPR035587">
    <property type="entry name" value="DUS-like_FMN-bd"/>
</dbReference>
<dbReference type="InterPro" id="IPR018517">
    <property type="entry name" value="tRNA_hU_synthase_CS"/>
</dbReference>
<dbReference type="InterPro" id="IPR000571">
    <property type="entry name" value="Znf_CCCH"/>
</dbReference>
<dbReference type="PANTHER" id="PTHR45846">
    <property type="entry name" value="TRNA-DIHYDROURIDINE(47) SYNTHASE [NAD(P)(+)]-LIKE"/>
    <property type="match status" value="1"/>
</dbReference>
<dbReference type="PANTHER" id="PTHR45846:SF1">
    <property type="entry name" value="TRNA-DIHYDROURIDINE(47) SYNTHASE [NAD(P)(+)]-LIKE"/>
    <property type="match status" value="1"/>
</dbReference>
<dbReference type="Pfam" id="PF01207">
    <property type="entry name" value="Dus"/>
    <property type="match status" value="1"/>
</dbReference>
<dbReference type="SUPFAM" id="SSF51395">
    <property type="entry name" value="FMN-linked oxidoreductases"/>
    <property type="match status" value="1"/>
</dbReference>
<dbReference type="PROSITE" id="PS01136">
    <property type="entry name" value="UPF0034"/>
    <property type="match status" value="1"/>
</dbReference>
<dbReference type="PROSITE" id="PS50103">
    <property type="entry name" value="ZF_C3H1"/>
    <property type="match status" value="2"/>
</dbReference>
<protein>
    <recommendedName>
        <fullName evidence="7">tRNA-dihydrouridine(47) synthase [NAD(P)(+)]-like</fullName>
        <ecNumber evidence="1">1.3.1.89</ecNumber>
    </recommendedName>
    <alternativeName>
        <fullName evidence="7">mRNA-dihydrouridine synthase DUS3L</fullName>
        <ecNumber evidence="1">1.3.1.-</ecNumber>
    </alternativeName>
    <alternativeName>
        <fullName>tRNA-dihydrouridine synthase 3-like</fullName>
    </alternativeName>
</protein>
<reference key="1">
    <citation type="submission" date="2006-03" db="EMBL/GenBank/DDBJ databases">
        <authorList>
            <consortium name="Sanger Xenopus tropicalis EST/cDNA project"/>
        </authorList>
    </citation>
    <scope>NUCLEOTIDE SEQUENCE [LARGE SCALE MRNA]</scope>
    <source>
        <tissue>Neurula</tissue>
    </source>
</reference>
<reference key="2">
    <citation type="submission" date="2003-12" db="EMBL/GenBank/DDBJ databases">
        <authorList>
            <consortium name="NIH - Xenopus Gene Collection (XGC) project"/>
        </authorList>
    </citation>
    <scope>NUCLEOTIDE SEQUENCE [LARGE SCALE MRNA]</scope>
    <source>
        <tissue>Embryo</tissue>
    </source>
</reference>
<name>DUS3L_XENTR</name>
<keyword id="KW-0285">Flavoprotein</keyword>
<keyword id="KW-0288">FMN</keyword>
<keyword id="KW-0479">Metal-binding</keyword>
<keyword id="KW-0507">mRNA processing</keyword>
<keyword id="KW-0520">NAD</keyword>
<keyword id="KW-0521">NADP</keyword>
<keyword id="KW-0560">Oxidoreductase</keyword>
<keyword id="KW-1185">Reference proteome</keyword>
<keyword id="KW-0677">Repeat</keyword>
<keyword id="KW-0819">tRNA processing</keyword>
<keyword id="KW-0862">Zinc</keyword>
<keyword id="KW-0863">Zinc-finger</keyword>
<evidence type="ECO:0000250" key="1">
    <source>
        <dbReference type="UniProtKB" id="Q06053"/>
    </source>
</evidence>
<evidence type="ECO:0000250" key="2">
    <source>
        <dbReference type="UniProtKB" id="Q5SMC7"/>
    </source>
</evidence>
<evidence type="ECO:0000250" key="3">
    <source>
        <dbReference type="UniProtKB" id="Q96G46"/>
    </source>
</evidence>
<evidence type="ECO:0000250" key="4">
    <source>
        <dbReference type="UniProtKB" id="Q9UTH9"/>
    </source>
</evidence>
<evidence type="ECO:0000255" key="5">
    <source>
        <dbReference type="PROSITE-ProRule" id="PRU00723"/>
    </source>
</evidence>
<evidence type="ECO:0000256" key="6">
    <source>
        <dbReference type="SAM" id="MobiDB-lite"/>
    </source>
</evidence>
<evidence type="ECO:0000305" key="7"/>
<sequence>MAESDGSNNENGNLDTVTQKLDRGVAAIKPQYLTTKEKFHVFIDADGKEVVDKQTCSELSGNDAENTVRAEDAAEPEAKRIKLDDGTGEGQDKPPTSAENKQEKKRARGQNKSRPHMKHSQFEENKLCPSVTQECASKCFFGDKCKFLHDVAKYVSEKPEDIRPNCYLYETFGKCIYGVTCRFAKSHLGDNFKNLINEELMKQWEGQVLVKNSLDKSLKEQLRKRKVVFEKTDKYLKLCNKSGDSLKIKSPVVKEDNAAQVVQKDSPVTTVGAVTDEDLVKLRPCEKKTIDFRNKLYLAPLTTCGNLPFRRLCKRFGADITCGEMAMCTNLLQGQPSEWALLKRHHSEDIFGVQLEGAFPDTMTKCAELLNRTIDVDFVDINVGCPIDLVYKKGGGCGLMNRTNKFEQIVKGMNSVLDVPLTVKIRTGVQEKINIAHKLIPNLRDWGVSLVTLHGRSREQRYTKLADWEYIAQCADIASPLPLFGNGDIISYEDANRALQTGVSGIMLARGALLKPWLFTEIKEQRHWDISSTERFDILKDFTNYGLEHWGSDCQGVEKTRRFMLEWLSFLCRYIPIGLLEHVPQKINERPPYYMGRDYMETLMASQNVTDWIKISEMLLGPVPPNFSFLPKHKANSYK</sequence>
<comment type="function">
    <text evidence="3">Catalyzes the synthesis of dihydrouridine, a modified base, in various RNAs, such as tRNAs, mRNAs and some long non-coding RNAs (lncRNAs). Mainly modifies the uridine in position 47 (U47) in the D-loop of most cytoplasmic tRNAs. Also able to mediate the formation of dihydrouridine in some mRNAs, thereby regulating their translation.</text>
</comment>
<comment type="catalytic activity">
    <reaction evidence="1">
        <text>5,6-dihydrouridine(47) in tRNA + NAD(+) = uridine(47) in tRNA + NADH + H(+)</text>
        <dbReference type="Rhea" id="RHEA:53364"/>
        <dbReference type="Rhea" id="RHEA-COMP:13539"/>
        <dbReference type="Rhea" id="RHEA-COMP:13540"/>
        <dbReference type="ChEBI" id="CHEBI:15378"/>
        <dbReference type="ChEBI" id="CHEBI:57540"/>
        <dbReference type="ChEBI" id="CHEBI:57945"/>
        <dbReference type="ChEBI" id="CHEBI:65315"/>
        <dbReference type="ChEBI" id="CHEBI:74443"/>
        <dbReference type="EC" id="1.3.1.89"/>
    </reaction>
    <physiologicalReaction direction="right-to-left" evidence="1">
        <dbReference type="Rhea" id="RHEA:53366"/>
    </physiologicalReaction>
</comment>
<comment type="catalytic activity">
    <reaction evidence="1">
        <text>5,6-dihydrouridine(47) in tRNA + NADP(+) = uridine(47) in tRNA + NADPH + H(+)</text>
        <dbReference type="Rhea" id="RHEA:53360"/>
        <dbReference type="Rhea" id="RHEA-COMP:13539"/>
        <dbReference type="Rhea" id="RHEA-COMP:13540"/>
        <dbReference type="ChEBI" id="CHEBI:15378"/>
        <dbReference type="ChEBI" id="CHEBI:57783"/>
        <dbReference type="ChEBI" id="CHEBI:58349"/>
        <dbReference type="ChEBI" id="CHEBI:65315"/>
        <dbReference type="ChEBI" id="CHEBI:74443"/>
        <dbReference type="EC" id="1.3.1.89"/>
    </reaction>
    <physiologicalReaction direction="right-to-left" evidence="1">
        <dbReference type="Rhea" id="RHEA:53362"/>
    </physiologicalReaction>
</comment>
<comment type="catalytic activity">
    <reaction evidence="4">
        <text>a 5,6-dihydrouridine in mRNA + NAD(+) = a uridine in mRNA + NADH + H(+)</text>
        <dbReference type="Rhea" id="RHEA:69851"/>
        <dbReference type="Rhea" id="RHEA-COMP:14658"/>
        <dbReference type="Rhea" id="RHEA-COMP:17789"/>
        <dbReference type="ChEBI" id="CHEBI:15378"/>
        <dbReference type="ChEBI" id="CHEBI:57540"/>
        <dbReference type="ChEBI" id="CHEBI:57945"/>
        <dbReference type="ChEBI" id="CHEBI:65315"/>
        <dbReference type="ChEBI" id="CHEBI:74443"/>
    </reaction>
    <physiologicalReaction direction="right-to-left" evidence="4">
        <dbReference type="Rhea" id="RHEA:69853"/>
    </physiologicalReaction>
</comment>
<comment type="catalytic activity">
    <reaction evidence="4">
        <text>a 5,6-dihydrouridine in mRNA + NADP(+) = a uridine in mRNA + NADPH + H(+)</text>
        <dbReference type="Rhea" id="RHEA:69855"/>
        <dbReference type="Rhea" id="RHEA-COMP:14658"/>
        <dbReference type="Rhea" id="RHEA-COMP:17789"/>
        <dbReference type="ChEBI" id="CHEBI:15378"/>
        <dbReference type="ChEBI" id="CHEBI:57783"/>
        <dbReference type="ChEBI" id="CHEBI:58349"/>
        <dbReference type="ChEBI" id="CHEBI:65315"/>
        <dbReference type="ChEBI" id="CHEBI:74443"/>
    </reaction>
    <physiologicalReaction direction="right-to-left" evidence="4">
        <dbReference type="Rhea" id="RHEA:69857"/>
    </physiologicalReaction>
</comment>
<comment type="cofactor">
    <cofactor evidence="2">
        <name>FMN</name>
        <dbReference type="ChEBI" id="CHEBI:58210"/>
    </cofactor>
</comment>
<comment type="similarity">
    <text evidence="7">Belongs to the Dus family. Dus3 subfamily.</text>
</comment>
<accession>Q28BT8</accession>
<accession>Q6P2X3</accession>
<proteinExistence type="evidence at transcript level"/>
<feature type="chain" id="PRO_0000247346" description="tRNA-dihydrouridine(47) synthase [NAD(P)(+)]-like">
    <location>
        <begin position="1"/>
        <end position="639"/>
    </location>
</feature>
<feature type="zinc finger region" description="C3H1-type 1" evidence="5">
    <location>
        <begin position="122"/>
        <end position="152"/>
    </location>
</feature>
<feature type="zinc finger region" description="C3H1-type 2" evidence="5">
    <location>
        <begin position="160"/>
        <end position="190"/>
    </location>
</feature>
<feature type="region of interest" description="Disordered" evidence="6">
    <location>
        <begin position="1"/>
        <end position="20"/>
    </location>
</feature>
<feature type="region of interest" description="Disordered" evidence="6">
    <location>
        <begin position="52"/>
        <end position="122"/>
    </location>
</feature>
<feature type="compositionally biased region" description="Polar residues" evidence="6">
    <location>
        <begin position="1"/>
        <end position="19"/>
    </location>
</feature>
<feature type="compositionally biased region" description="Polar residues" evidence="6">
    <location>
        <begin position="54"/>
        <end position="65"/>
    </location>
</feature>
<feature type="compositionally biased region" description="Basic and acidic residues" evidence="6">
    <location>
        <begin position="66"/>
        <end position="85"/>
    </location>
</feature>
<feature type="compositionally biased region" description="Basic residues" evidence="6">
    <location>
        <begin position="103"/>
        <end position="119"/>
    </location>
</feature>
<feature type="active site" description="Proton donor" evidence="2">
    <location>
        <position position="385"/>
    </location>
</feature>
<feature type="binding site" evidence="2">
    <location>
        <begin position="300"/>
        <end position="302"/>
    </location>
    <ligand>
        <name>FMN</name>
        <dbReference type="ChEBI" id="CHEBI:58210"/>
    </ligand>
</feature>
<feature type="binding site" evidence="2">
    <location>
        <position position="354"/>
    </location>
    <ligand>
        <name>FMN</name>
        <dbReference type="ChEBI" id="CHEBI:58210"/>
    </ligand>
</feature>
<feature type="binding site" evidence="2">
    <location>
        <position position="424"/>
    </location>
    <ligand>
        <name>FMN</name>
        <dbReference type="ChEBI" id="CHEBI:58210"/>
    </ligand>
</feature>
<feature type="binding site" evidence="2">
    <location>
        <position position="454"/>
    </location>
    <ligand>
        <name>FMN</name>
        <dbReference type="ChEBI" id="CHEBI:58210"/>
    </ligand>
</feature>
<feature type="binding site" evidence="2">
    <location>
        <begin position="486"/>
        <end position="488"/>
    </location>
    <ligand>
        <name>FMN</name>
        <dbReference type="ChEBI" id="CHEBI:58210"/>
    </ligand>
</feature>
<feature type="binding site" evidence="2">
    <location>
        <begin position="509"/>
        <end position="510"/>
    </location>
    <ligand>
        <name>FMN</name>
        <dbReference type="ChEBI" id="CHEBI:58210"/>
    </ligand>
</feature>
<feature type="sequence conflict" description="In Ref. 1; CAJ83250." evidence="7" ref="1">
    <original>N</original>
    <variation>T</variation>
    <location>
        <position position="13"/>
    </location>
</feature>